<dbReference type="EC" id="3.1.1.4" evidence="2"/>
<dbReference type="SMR" id="P0DJJ7"/>
<dbReference type="GO" id="GO:0005576">
    <property type="term" value="C:extracellular region"/>
    <property type="evidence" value="ECO:0000304"/>
    <property type="project" value="UniProtKB"/>
</dbReference>
<dbReference type="GO" id="GO:0043655">
    <property type="term" value="C:host extracellular space"/>
    <property type="evidence" value="ECO:0000304"/>
    <property type="project" value="UniProtKB"/>
</dbReference>
<dbReference type="GO" id="GO:0005509">
    <property type="term" value="F:calcium ion binding"/>
    <property type="evidence" value="ECO:0007669"/>
    <property type="project" value="InterPro"/>
</dbReference>
<dbReference type="GO" id="GO:0004623">
    <property type="term" value="F:phospholipase A2 activity"/>
    <property type="evidence" value="ECO:0000314"/>
    <property type="project" value="UniProtKB"/>
</dbReference>
<dbReference type="GO" id="GO:0090729">
    <property type="term" value="F:toxin activity"/>
    <property type="evidence" value="ECO:0007669"/>
    <property type="project" value="UniProtKB-KW"/>
</dbReference>
<dbReference type="GO" id="GO:0050482">
    <property type="term" value="P:arachidonate secretion"/>
    <property type="evidence" value="ECO:0007669"/>
    <property type="project" value="InterPro"/>
</dbReference>
<dbReference type="GO" id="GO:0016042">
    <property type="term" value="P:lipid catabolic process"/>
    <property type="evidence" value="ECO:0000314"/>
    <property type="project" value="UniProtKB"/>
</dbReference>
<dbReference type="GO" id="GO:0006644">
    <property type="term" value="P:phospholipid metabolic process"/>
    <property type="evidence" value="ECO:0000314"/>
    <property type="project" value="UniProtKB"/>
</dbReference>
<dbReference type="Gene3D" id="1.20.90.10">
    <property type="entry name" value="Phospholipase A2 domain"/>
    <property type="match status" value="1"/>
</dbReference>
<dbReference type="InterPro" id="IPR001211">
    <property type="entry name" value="PLipase_A2"/>
</dbReference>
<dbReference type="InterPro" id="IPR036444">
    <property type="entry name" value="PLipase_A2_dom_sf"/>
</dbReference>
<dbReference type="PRINTS" id="PR00389">
    <property type="entry name" value="PHPHLIPASEA2"/>
</dbReference>
<dbReference type="SUPFAM" id="SSF48619">
    <property type="entry name" value="Phospholipase A2, PLA2"/>
    <property type="match status" value="1"/>
</dbReference>
<evidence type="ECO:0000250" key="1"/>
<evidence type="ECO:0000269" key="2">
    <source>
    </source>
</evidence>
<evidence type="ECO:0000303" key="3">
    <source>
    </source>
</evidence>
<evidence type="ECO:0000305" key="4"/>
<evidence type="ECO:0000305" key="5">
    <source>
    </source>
</evidence>
<comment type="function">
    <text evidence="1 2">Snake venom phospholipase A2 (PLA2) that inhibits the ADP- and collagen-induced human platelet aggregation (By similarity). Exhibits strong hydrolytic activities and prefers the anionic micelles (dPPC with deoxycholate) to the zwitterionic micelles (dPPC with Triton X-100). PLA2 catalyzes the calcium-dependent hydrolysis of the 2-acyl groups in 3-sn-phosphoglycerides.</text>
</comment>
<comment type="catalytic activity">
    <reaction evidence="2">
        <text>a 1,2-diacyl-sn-glycero-3-phosphocholine + H2O = a 1-acyl-sn-glycero-3-phosphocholine + a fatty acid + H(+)</text>
        <dbReference type="Rhea" id="RHEA:15801"/>
        <dbReference type="ChEBI" id="CHEBI:15377"/>
        <dbReference type="ChEBI" id="CHEBI:15378"/>
        <dbReference type="ChEBI" id="CHEBI:28868"/>
        <dbReference type="ChEBI" id="CHEBI:57643"/>
        <dbReference type="ChEBI" id="CHEBI:58168"/>
        <dbReference type="EC" id="3.1.1.4"/>
    </reaction>
    <physiologicalReaction direction="left-to-right" evidence="5">
        <dbReference type="Rhea" id="RHEA:15802"/>
    </physiologicalReaction>
</comment>
<comment type="cofactor">
    <cofactor evidence="1">
        <name>Ca(2+)</name>
        <dbReference type="ChEBI" id="CHEBI:29108"/>
    </cofactor>
    <text evidence="1">Binds 1 Ca(2+) ion.</text>
</comment>
<comment type="subcellular location">
    <subcellularLocation>
        <location>Secreted</location>
    </subcellularLocation>
</comment>
<comment type="tissue specificity">
    <text>Expressed by the venom gland.</text>
</comment>
<comment type="mass spectrometry" mass="13801.0" method="Electrospray" evidence="2"/>
<comment type="similarity">
    <text evidence="4">Belongs to the phospholipase A2 family. Group II subfamily.</text>
</comment>
<feature type="chain" id="PRO_0000419053" description="Acidic phospholipase A2 Omo-E6">
    <location>
        <begin position="1"/>
        <end position="29" status="greater than"/>
    </location>
</feature>
<feature type="binding site" evidence="1">
    <location>
        <position position="27"/>
    </location>
    <ligand>
        <name>Ca(2+)</name>
        <dbReference type="ChEBI" id="CHEBI:29108"/>
    </ligand>
</feature>
<feature type="binding site" evidence="1">
    <location>
        <position position="29"/>
    </location>
    <ligand>
        <name>Ca(2+)</name>
        <dbReference type="ChEBI" id="CHEBI:29108"/>
    </ligand>
</feature>
<feature type="disulfide bond" evidence="1">
    <location>
        <begin position="26"/>
        <end status="unknown"/>
    </location>
</feature>
<feature type="disulfide bond" evidence="1">
    <location>
        <begin position="28"/>
        <end status="unknown"/>
    </location>
</feature>
<feature type="non-terminal residue">
    <location>
        <position position="29"/>
    </location>
</feature>
<proteinExistence type="evidence at protein level"/>
<name>PA2A_OVOMO</name>
<accession>P0DJJ7</accession>
<sequence length="29" mass="3263">DLMQFETLIMKIAGRSGVWIYGSYGCYCG</sequence>
<organism>
    <name type="scientific">Ovophis monticola</name>
    <name type="common">Chinese mountain pitviper</name>
    <name type="synonym">Trimeresurus monticola</name>
    <dbReference type="NCBI Taxonomy" id="103941"/>
    <lineage>
        <taxon>Eukaryota</taxon>
        <taxon>Metazoa</taxon>
        <taxon>Chordata</taxon>
        <taxon>Craniata</taxon>
        <taxon>Vertebrata</taxon>
        <taxon>Euteleostomi</taxon>
        <taxon>Lepidosauria</taxon>
        <taxon>Squamata</taxon>
        <taxon>Bifurcata</taxon>
        <taxon>Unidentata</taxon>
        <taxon>Episquamata</taxon>
        <taxon>Toxicofera</taxon>
        <taxon>Serpentes</taxon>
        <taxon>Colubroidea</taxon>
        <taxon>Viperidae</taxon>
        <taxon>Crotalinae</taxon>
        <taxon>Ovophis</taxon>
    </lineage>
</organism>
<protein>
    <recommendedName>
        <fullName>Acidic phospholipase A2 Omo-E6</fullName>
        <shortName evidence="3">svPLA2</shortName>
        <ecNumber evidence="2">3.1.1.4</ecNumber>
    </recommendedName>
    <alternativeName>
        <fullName>Phosphatidylcholine 2-acylhydrolase</fullName>
    </alternativeName>
</protein>
<reference key="1">
    <citation type="journal article" date="2012" name="Toxicon">
        <title>Cloning and characterization of Trimeresurus gracilis venom phospholipases A(2): comparison with Ovophis okinavensis venom and the systematic implications.</title>
        <authorList>
            <person name="Tsai I.-H."/>
            <person name="Tsai T.-S."/>
            <person name="Wang Y.-M."/>
            <person name="Tu M.-C."/>
            <person name="Chang H.-C."/>
        </authorList>
    </citation>
    <scope>PROTEIN SEQUENCE</scope>
    <scope>FUNCTION</scope>
    <scope>MASS SPECTROMETRY</scope>
    <scope>CATALYTIC ACTIVITY</scope>
    <source>
        <tissue>Venom</tissue>
    </source>
</reference>
<keyword id="KW-0106">Calcium</keyword>
<keyword id="KW-0903">Direct protein sequencing</keyword>
<keyword id="KW-1015">Disulfide bond</keyword>
<keyword id="KW-1199">Hemostasis impairing toxin</keyword>
<keyword id="KW-0378">Hydrolase</keyword>
<keyword id="KW-0442">Lipid degradation</keyword>
<keyword id="KW-0443">Lipid metabolism</keyword>
<keyword id="KW-0479">Metal-binding</keyword>
<keyword id="KW-1201">Platelet aggregation inhibiting toxin</keyword>
<keyword id="KW-0964">Secreted</keyword>
<keyword id="KW-0800">Toxin</keyword>